<proteinExistence type="inferred from homology"/>
<feature type="chain" id="PRO_0000381787" description="Protein adenylyltransferase Fic">
    <location>
        <begin position="1"/>
        <end position="508"/>
    </location>
</feature>
<feature type="transmembrane region" description="Helical" evidence="4">
    <location>
        <begin position="48"/>
        <end position="70"/>
    </location>
</feature>
<feature type="repeat" description="TPR 1">
    <location>
        <begin position="132"/>
        <end position="165"/>
    </location>
</feature>
<feature type="repeat" description="TPR 2">
    <location>
        <begin position="166"/>
        <end position="200"/>
    </location>
</feature>
<feature type="domain" description="Fido" evidence="5">
    <location>
        <begin position="311"/>
        <end position="446"/>
    </location>
</feature>
<feature type="short sequence motif" description="Inhibitory (S/T)XXXE(G/N) motif">
    <location>
        <begin position="257"/>
        <end position="262"/>
    </location>
</feature>
<feature type="active site" evidence="1">
    <location>
        <position position="389"/>
    </location>
</feature>
<feature type="binding site" evidence="3">
    <location>
        <position position="261"/>
    </location>
    <ligand>
        <name>ATP</name>
        <dbReference type="ChEBI" id="CHEBI:30616"/>
    </ligand>
</feature>
<feature type="binding site" evidence="3">
    <location>
        <begin position="342"/>
        <end position="345"/>
    </location>
    <ligand>
        <name>ATP</name>
        <dbReference type="ChEBI" id="CHEBI:30616"/>
    </ligand>
</feature>
<feature type="binding site" evidence="3">
    <location>
        <begin position="393"/>
        <end position="400"/>
    </location>
    <ligand>
        <name>ATP</name>
        <dbReference type="ChEBI" id="CHEBI:30616"/>
    </ligand>
</feature>
<feature type="binding site" evidence="3">
    <location>
        <begin position="425"/>
        <end position="426"/>
    </location>
    <ligand>
        <name>ATP</name>
        <dbReference type="ChEBI" id="CHEBI:30616"/>
    </ligand>
</feature>
<feature type="binding site" evidence="3">
    <location>
        <position position="433"/>
    </location>
    <ligand>
        <name>ATP</name>
        <dbReference type="ChEBI" id="CHEBI:30616"/>
    </ligand>
</feature>
<feature type="site" description="Important for autoinhibition of adenylyltransferase activity" evidence="3">
    <location>
        <position position="261"/>
    </location>
</feature>
<keyword id="KW-0067">ATP-binding</keyword>
<keyword id="KW-0378">Hydrolase</keyword>
<keyword id="KW-0472">Membrane</keyword>
<keyword id="KW-0547">Nucleotide-binding</keyword>
<keyword id="KW-0548">Nucleotidyltransferase</keyword>
<keyword id="KW-1185">Reference proteome</keyword>
<keyword id="KW-0677">Repeat</keyword>
<keyword id="KW-0802">TPR repeat</keyword>
<keyword id="KW-0808">Transferase</keyword>
<keyword id="KW-0812">Transmembrane</keyword>
<keyword id="KW-1133">Transmembrane helix</keyword>
<gene>
    <name type="ORF">GL25530</name>
</gene>
<evidence type="ECO:0000250" key="1">
    <source>
        <dbReference type="UniProtKB" id="A0A061I403"/>
    </source>
</evidence>
<evidence type="ECO:0000250" key="2">
    <source>
        <dbReference type="UniProtKB" id="Q8SWV6"/>
    </source>
</evidence>
<evidence type="ECO:0000250" key="3">
    <source>
        <dbReference type="UniProtKB" id="Q9BVA6"/>
    </source>
</evidence>
<evidence type="ECO:0000255" key="4"/>
<evidence type="ECO:0000255" key="5">
    <source>
        <dbReference type="PROSITE-ProRule" id="PRU00791"/>
    </source>
</evidence>
<evidence type="ECO:0000305" key="6"/>
<protein>
    <recommendedName>
        <fullName>Protein adenylyltransferase Fic</fullName>
        <ecNumber evidence="2">2.7.7.108</ecNumber>
    </recommendedName>
    <alternativeName>
        <fullName evidence="6">De-AMPylase Fic</fullName>
        <ecNumber evidence="1 2">3.1.4.-</ecNumber>
    </alternativeName>
</protein>
<comment type="function">
    <text evidence="1 2">Protein that can both mediate the addition of adenosine 5'-monophosphate (AMP) to specific residues of target proteins (AMPylation), and the removal of the same modification from target proteins (de-AMPylation), depending on the context (By similarity). The side chain of Glu-261 determines which of the two opposing activities (AMPylase or de-AMPylase) will take place (By similarity). Acts as a key regulator of the unfolded protein response (UPR) by mediating AMPylation or de-AMPylation of Hsc70-3/BiP. In unstressed cells, acts as an adenylyltransferase by mediating AMPylation of Hsc70-3/BiP at 'Thr-518', thereby inactivating it. In response to endoplasmic reticulum stress, acts as a phosphodiesterase by mediating removal of ATP (de-AMPylation) from Hsc70-3/BiP at 'Thr-518', leading to restore HSPA5/BiP activity (By similarity).</text>
</comment>
<comment type="catalytic activity">
    <reaction evidence="3">
        <text>L-tyrosyl-[protein] + ATP = O-(5'-adenylyl)-L-tyrosyl-[protein] + diphosphate</text>
        <dbReference type="Rhea" id="RHEA:54288"/>
        <dbReference type="Rhea" id="RHEA-COMP:10136"/>
        <dbReference type="Rhea" id="RHEA-COMP:13846"/>
        <dbReference type="ChEBI" id="CHEBI:30616"/>
        <dbReference type="ChEBI" id="CHEBI:33019"/>
        <dbReference type="ChEBI" id="CHEBI:46858"/>
        <dbReference type="ChEBI" id="CHEBI:83624"/>
        <dbReference type="EC" id="2.7.7.108"/>
    </reaction>
</comment>
<comment type="catalytic activity">
    <reaction evidence="2">
        <text>L-threonyl-[protein] + ATP = 3-O-(5'-adenylyl)-L-threonyl-[protein] + diphosphate</text>
        <dbReference type="Rhea" id="RHEA:54292"/>
        <dbReference type="Rhea" id="RHEA-COMP:11060"/>
        <dbReference type="Rhea" id="RHEA-COMP:13847"/>
        <dbReference type="ChEBI" id="CHEBI:30013"/>
        <dbReference type="ChEBI" id="CHEBI:30616"/>
        <dbReference type="ChEBI" id="CHEBI:33019"/>
        <dbReference type="ChEBI" id="CHEBI:138113"/>
        <dbReference type="EC" id="2.7.7.108"/>
    </reaction>
</comment>
<comment type="catalytic activity">
    <reaction evidence="2">
        <text>3-O-(5'-adenylyl)-L-threonyl-[protein] + H2O = L-threonyl-[protein] + AMP + H(+)</text>
        <dbReference type="Rhea" id="RHEA:55932"/>
        <dbReference type="Rhea" id="RHEA-COMP:11060"/>
        <dbReference type="Rhea" id="RHEA-COMP:13847"/>
        <dbReference type="ChEBI" id="CHEBI:15377"/>
        <dbReference type="ChEBI" id="CHEBI:15378"/>
        <dbReference type="ChEBI" id="CHEBI:30013"/>
        <dbReference type="ChEBI" id="CHEBI:138113"/>
        <dbReference type="ChEBI" id="CHEBI:456215"/>
    </reaction>
</comment>
<comment type="activity regulation">
    <text evidence="1 3">The side chain of Glu-261 determines which of the two opposing activities (AMPylase or de-AMPylase) will take place. In response to endoplasmic reticulum stress, mediates de-AMPylase activity (By similarity). Adenylyltransferase activity is inhibited by the inhibitory helix present at the N-terminus: Glu-261 binds ATP and competes with ATP-binding at Arg-400, thereby preventing adenylyltransferase activity (By similarity). In unstressed cells, disengagement of Glu-261 promotes adenylyltransferase activity (By similarity). Activation dissociates ATP-binding from Glu-261, allowing ordered binding of the entire ATP moiety with the alpha-phosphate in an orientation that is productive for accepting an incoming target hydroxyl side chain (By similarity).</text>
</comment>
<comment type="subunit">
    <text evidence="2">Homodimer.</text>
</comment>
<comment type="subcellular location">
    <subcellularLocation>
        <location evidence="2">Membrane</location>
        <topology evidence="2">Single-pass membrane protein</topology>
    </subcellularLocation>
</comment>
<comment type="domain">
    <text evidence="3">The fido domain mediates the adenylyltransferase activity.</text>
</comment>
<comment type="similarity">
    <text evidence="6">Belongs to the fic family.</text>
</comment>
<reference key="1">
    <citation type="journal article" date="2007" name="Nature">
        <title>Evolution of genes and genomes on the Drosophila phylogeny.</title>
        <authorList>
            <consortium name="Drosophila 12 genomes consortium"/>
        </authorList>
    </citation>
    <scope>NUCLEOTIDE SEQUENCE [LARGE SCALE GENOMIC DNA]</scope>
    <source>
        <strain>MSH-3 / Tucson 14011-0111.49</strain>
    </source>
</reference>
<dbReference type="EC" id="2.7.7.108" evidence="2"/>
<dbReference type="EC" id="3.1.4.-" evidence="1 2"/>
<dbReference type="EMBL" id="CH479184">
    <property type="protein sequence ID" value="EDW37435.1"/>
    <property type="molecule type" value="Genomic_DNA"/>
</dbReference>
<dbReference type="SMR" id="B4GJC1"/>
<dbReference type="STRING" id="7234.B4GJC1"/>
<dbReference type="EnsemblMetazoa" id="FBtr0191145">
    <property type="protein sequence ID" value="FBpp0189637"/>
    <property type="gene ID" value="FBgn0163114"/>
</dbReference>
<dbReference type="EnsemblMetazoa" id="XM_002019203.2">
    <property type="protein sequence ID" value="XP_002019239.1"/>
    <property type="gene ID" value="LOC6593652"/>
</dbReference>
<dbReference type="GeneID" id="6593652"/>
<dbReference type="KEGG" id="dpe:6593652"/>
<dbReference type="CTD" id="33897"/>
<dbReference type="eggNOG" id="KOG3824">
    <property type="taxonomic scope" value="Eukaryota"/>
</dbReference>
<dbReference type="HOGENOM" id="CLU_040460_0_0_1"/>
<dbReference type="OMA" id="QLRCQLW"/>
<dbReference type="OrthoDB" id="439046at2759"/>
<dbReference type="PhylomeDB" id="B4GJC1"/>
<dbReference type="Proteomes" id="UP000008744">
    <property type="component" value="Unassembled WGS sequence"/>
</dbReference>
<dbReference type="GO" id="GO:0005886">
    <property type="term" value="C:plasma membrane"/>
    <property type="evidence" value="ECO:0007669"/>
    <property type="project" value="EnsemblMetazoa"/>
</dbReference>
<dbReference type="GO" id="GO:0070733">
    <property type="term" value="F:AMPylase activity"/>
    <property type="evidence" value="ECO:0000250"/>
    <property type="project" value="UniProtKB"/>
</dbReference>
<dbReference type="GO" id="GO:0005524">
    <property type="term" value="F:ATP binding"/>
    <property type="evidence" value="ECO:0007669"/>
    <property type="project" value="UniProtKB-KW"/>
</dbReference>
<dbReference type="GO" id="GO:0030544">
    <property type="term" value="F:Hsp70 protein binding"/>
    <property type="evidence" value="ECO:0007669"/>
    <property type="project" value="EnsemblMetazoa"/>
</dbReference>
<dbReference type="GO" id="GO:0044603">
    <property type="term" value="F:protein adenylylhydrolase activity"/>
    <property type="evidence" value="ECO:0007669"/>
    <property type="project" value="EnsemblMetazoa"/>
</dbReference>
<dbReference type="GO" id="GO:0042803">
    <property type="term" value="F:protein homodimerization activity"/>
    <property type="evidence" value="ECO:0007669"/>
    <property type="project" value="EnsemblMetazoa"/>
</dbReference>
<dbReference type="GO" id="GO:0050908">
    <property type="term" value="P:detection of light stimulus involved in visual perception"/>
    <property type="evidence" value="ECO:0007669"/>
    <property type="project" value="EnsemblMetazoa"/>
</dbReference>
<dbReference type="GO" id="GO:0051608">
    <property type="term" value="P:histamine transport"/>
    <property type="evidence" value="ECO:0007669"/>
    <property type="project" value="EnsemblMetazoa"/>
</dbReference>
<dbReference type="GO" id="GO:0018117">
    <property type="term" value="P:protein adenylylation"/>
    <property type="evidence" value="ECO:0000250"/>
    <property type="project" value="UniProtKB"/>
</dbReference>
<dbReference type="GO" id="GO:0034976">
    <property type="term" value="P:response to endoplasmic reticulum stress"/>
    <property type="evidence" value="ECO:0007669"/>
    <property type="project" value="EnsemblMetazoa"/>
</dbReference>
<dbReference type="GO" id="GO:0007632">
    <property type="term" value="P:visual behavior"/>
    <property type="evidence" value="ECO:0007669"/>
    <property type="project" value="EnsemblMetazoa"/>
</dbReference>
<dbReference type="FunFam" id="1.10.3290.10:FF:000001">
    <property type="entry name" value="adenosine monophosphate-protein transferase FICD"/>
    <property type="match status" value="1"/>
</dbReference>
<dbReference type="FunFam" id="1.25.40.10:FF:000522">
    <property type="entry name" value="Protein adenylyltransferase Fic"/>
    <property type="match status" value="1"/>
</dbReference>
<dbReference type="Gene3D" id="1.10.3290.10">
    <property type="entry name" value="Fido-like domain"/>
    <property type="match status" value="1"/>
</dbReference>
<dbReference type="Gene3D" id="1.25.40.10">
    <property type="entry name" value="Tetratricopeptide repeat domain"/>
    <property type="match status" value="1"/>
</dbReference>
<dbReference type="InterPro" id="IPR003812">
    <property type="entry name" value="Fido"/>
</dbReference>
<dbReference type="InterPro" id="IPR036597">
    <property type="entry name" value="Fido-like_dom_sf"/>
</dbReference>
<dbReference type="InterPro" id="IPR040198">
    <property type="entry name" value="Fido_containing"/>
</dbReference>
<dbReference type="InterPro" id="IPR011990">
    <property type="entry name" value="TPR-like_helical_dom_sf"/>
</dbReference>
<dbReference type="PANTHER" id="PTHR13504">
    <property type="entry name" value="FIDO DOMAIN-CONTAINING PROTEIN DDB_G0283145"/>
    <property type="match status" value="1"/>
</dbReference>
<dbReference type="PANTHER" id="PTHR13504:SF34">
    <property type="entry name" value="PROTEIN ADENYLYLTRANSFERASE FICD"/>
    <property type="match status" value="1"/>
</dbReference>
<dbReference type="Pfam" id="PF02661">
    <property type="entry name" value="Fic"/>
    <property type="match status" value="1"/>
</dbReference>
<dbReference type="SUPFAM" id="SSF140931">
    <property type="entry name" value="Fic-like"/>
    <property type="match status" value="1"/>
</dbReference>
<dbReference type="SUPFAM" id="SSF48452">
    <property type="entry name" value="TPR-like"/>
    <property type="match status" value="1"/>
</dbReference>
<dbReference type="PROSITE" id="PS51459">
    <property type="entry name" value="FIDO"/>
    <property type="match status" value="1"/>
</dbReference>
<dbReference type="PROSITE" id="PS50293">
    <property type="entry name" value="TPR_REGION"/>
    <property type="match status" value="1"/>
</dbReference>
<organism>
    <name type="scientific">Drosophila persimilis</name>
    <name type="common">Fruit fly</name>
    <dbReference type="NCBI Taxonomy" id="7234"/>
    <lineage>
        <taxon>Eukaryota</taxon>
        <taxon>Metazoa</taxon>
        <taxon>Ecdysozoa</taxon>
        <taxon>Arthropoda</taxon>
        <taxon>Hexapoda</taxon>
        <taxon>Insecta</taxon>
        <taxon>Pterygota</taxon>
        <taxon>Neoptera</taxon>
        <taxon>Endopterygota</taxon>
        <taxon>Diptera</taxon>
        <taxon>Brachycera</taxon>
        <taxon>Muscomorpha</taxon>
        <taxon>Ephydroidea</taxon>
        <taxon>Drosophilidae</taxon>
        <taxon>Drosophila</taxon>
        <taxon>Sophophora</taxon>
    </lineage>
</organism>
<sequence>MAMTILHASEKVNAEAEATTCPPTEKVKEEQQQQEQLQHSKTSKRVQFYRFALFFIAGSFAAFSFHALTSSSSWRLRQLHHLPNAHYLQTREEFAVYSVEELNAFKEFYDKSISDSVGASYSEAEQTNIKEALGALRLAQDMHLSGKDDKASRLFEHALALAPKHPEVLLRYGEFLEHNQRNIVLADQYYFQALTLCPSNSEALANRQRTAEVVQTLDERRLQSLDSKRDALSAIHESSSALRRAKKEAYFQHIYHSVGIEGNTMTLAQTRSILETRMAVDGKSIDEHNEILGMDLAMKYINASLVQKLEITIKDILELHRRVLGHVDPIEGGEFRRNQVYVGGHVPPGPGDLALLMQRFERWLNSEHSSSLHPVNYAAYAHYKLVHIHPFIDGNGRTSRLLMNTLLMRAGYPPVIIPKQQRSKYYHFLKLANEGDIRPFVRFIADCTEKTLDLYLWATSDLPQQIPMLIQTESEAGEQLAQMRSPHISAQSASIPEFYEFSGSGFQP</sequence>
<name>FICD_DROPE</name>
<accession>B4GJC1</accession>